<name>PDAD_THESM</name>
<accession>C6A2R5</accession>
<protein>
    <recommendedName>
        <fullName evidence="1">Pyruvoyl-dependent arginine decarboxylase</fullName>
        <shortName evidence="1">PvlArgDC</shortName>
        <ecNumber evidence="1">4.1.1.19</ecNumber>
    </recommendedName>
    <component>
        <recommendedName>
            <fullName evidence="1">Pyruvoyl-dependent arginine decarboxylase subunit beta</fullName>
        </recommendedName>
    </component>
    <component>
        <recommendedName>
            <fullName evidence="1">Pyruvoyl-dependent arginine decarboxylase subunit alpha</fullName>
        </recommendedName>
    </component>
</protein>
<keyword id="KW-0210">Decarboxylase</keyword>
<keyword id="KW-0456">Lyase</keyword>
<keyword id="KW-0670">Pyruvate</keyword>
<keyword id="KW-1185">Reference proteome</keyword>
<gene>
    <name evidence="1" type="primary">pdaD</name>
    <name type="ordered locus">TSIB_0849</name>
</gene>
<evidence type="ECO:0000255" key="1">
    <source>
        <dbReference type="HAMAP-Rule" id="MF_01404"/>
    </source>
</evidence>
<comment type="catalytic activity">
    <reaction evidence="1">
        <text>L-arginine + H(+) = agmatine + CO2</text>
        <dbReference type="Rhea" id="RHEA:17641"/>
        <dbReference type="ChEBI" id="CHEBI:15378"/>
        <dbReference type="ChEBI" id="CHEBI:16526"/>
        <dbReference type="ChEBI" id="CHEBI:32682"/>
        <dbReference type="ChEBI" id="CHEBI:58145"/>
        <dbReference type="EC" id="4.1.1.19"/>
    </reaction>
</comment>
<comment type="cofactor">
    <cofactor evidence="1">
        <name>pyruvate</name>
        <dbReference type="ChEBI" id="CHEBI:15361"/>
    </cofactor>
    <text evidence="1">Binds 1 pyruvoyl group covalently per subunit.</text>
</comment>
<comment type="similarity">
    <text evidence="1">Belongs to the PdaD family.</text>
</comment>
<proteinExistence type="inferred from homology"/>
<feature type="chain" id="PRO_1000215198" description="Pyruvoyl-dependent arginine decarboxylase subunit beta" evidence="1">
    <location>
        <begin position="1"/>
        <end position="43"/>
    </location>
</feature>
<feature type="chain" id="PRO_1000215199" description="Pyruvoyl-dependent arginine decarboxylase subunit alpha" evidence="1">
    <location>
        <begin position="44"/>
        <end position="158"/>
    </location>
</feature>
<feature type="site" description="Cleavage (non-hydrolytic)" evidence="1">
    <location>
        <begin position="43"/>
        <end position="44"/>
    </location>
</feature>
<feature type="modified residue" description="Pyruvic acid (Ser)" evidence="1">
    <location>
        <position position="44"/>
    </location>
</feature>
<dbReference type="EC" id="4.1.1.19" evidence="1"/>
<dbReference type="EMBL" id="CP001463">
    <property type="protein sequence ID" value="ACS89910.1"/>
    <property type="molecule type" value="Genomic_DNA"/>
</dbReference>
<dbReference type="RefSeq" id="WP_015849130.1">
    <property type="nucleotide sequence ID" value="NC_012883.1"/>
</dbReference>
<dbReference type="SMR" id="C6A2R5"/>
<dbReference type="STRING" id="604354.TSIB_0849"/>
<dbReference type="GeneID" id="8095840"/>
<dbReference type="KEGG" id="tsi:TSIB_0849"/>
<dbReference type="eggNOG" id="arCOG04490">
    <property type="taxonomic scope" value="Archaea"/>
</dbReference>
<dbReference type="HOGENOM" id="CLU_114389_2_0_2"/>
<dbReference type="OrthoDB" id="30748at2157"/>
<dbReference type="Proteomes" id="UP000009079">
    <property type="component" value="Chromosome"/>
</dbReference>
<dbReference type="GO" id="GO:0008792">
    <property type="term" value="F:arginine decarboxylase activity"/>
    <property type="evidence" value="ECO:0007669"/>
    <property type="project" value="UniProtKB-UniRule"/>
</dbReference>
<dbReference type="GO" id="GO:0006527">
    <property type="term" value="P:arginine catabolic process"/>
    <property type="evidence" value="ECO:0007669"/>
    <property type="project" value="InterPro"/>
</dbReference>
<dbReference type="Gene3D" id="3.30.60.30">
    <property type="match status" value="1"/>
</dbReference>
<dbReference type="Gene3D" id="3.50.20.10">
    <property type="entry name" value="Pyruvoyl-Dependent Histidine Decarboxylase, subunit B"/>
    <property type="match status" value="1"/>
</dbReference>
<dbReference type="HAMAP" id="MF_01404">
    <property type="entry name" value="PvlArgDC"/>
    <property type="match status" value="1"/>
</dbReference>
<dbReference type="InterPro" id="IPR016104">
    <property type="entry name" value="Pyr-dep_his/arg-deCO2ase"/>
</dbReference>
<dbReference type="InterPro" id="IPR016105">
    <property type="entry name" value="Pyr-dep_his/arg-deCO2ase_sand"/>
</dbReference>
<dbReference type="InterPro" id="IPR002724">
    <property type="entry name" value="Pyruvoyl-dep_arg_deCO2ase"/>
</dbReference>
<dbReference type="NCBIfam" id="TIGR00286">
    <property type="entry name" value="pyruvoyl-dependent arginine decarboxylase"/>
    <property type="match status" value="1"/>
</dbReference>
<dbReference type="PANTHER" id="PTHR40438">
    <property type="entry name" value="PYRUVOYL-DEPENDENT ARGININE DECARBOXYLASE"/>
    <property type="match status" value="1"/>
</dbReference>
<dbReference type="PANTHER" id="PTHR40438:SF1">
    <property type="entry name" value="PYRUVOYL-DEPENDENT ARGININE DECARBOXYLASE"/>
    <property type="match status" value="1"/>
</dbReference>
<dbReference type="Pfam" id="PF01862">
    <property type="entry name" value="PvlArgDC"/>
    <property type="match status" value="1"/>
</dbReference>
<dbReference type="PIRSF" id="PIRSF005216">
    <property type="entry name" value="Pyruvoyl-dep_arg_deCO2ase"/>
    <property type="match status" value="1"/>
</dbReference>
<dbReference type="SFLD" id="SFLDF00471">
    <property type="entry name" value="Pyruvoyl-dependent_arginine_de"/>
    <property type="match status" value="1"/>
</dbReference>
<dbReference type="SFLD" id="SFLDG01170">
    <property type="entry name" value="Pyruvoyl-dependent_arginine_de"/>
    <property type="match status" value="1"/>
</dbReference>
<dbReference type="SFLD" id="SFLDS00055">
    <property type="entry name" value="Pyruvoyl-Dependent_Histidine/A"/>
    <property type="match status" value="1"/>
</dbReference>
<dbReference type="SUPFAM" id="SSF56271">
    <property type="entry name" value="Pyruvoyl-dependent histidine and arginine decarboxylases"/>
    <property type="match status" value="1"/>
</dbReference>
<sequence length="158" mass="17071">MSWTTPKKAILLAASAEGSTKLNAFDNALLKMGIGNVNLVKLSSVIPAYIEWIDELPKNIPVGMLLPTVYAHIESDEPGSTITAALGVGISEGNEGGLIYEYSGYCTKEEAEKMVHKMVEEGFKVRGWKLKEFKAAVAEITVKDRPVAAIAAVVMLPY</sequence>
<reference key="1">
    <citation type="journal article" date="2009" name="Appl. Environ. Microbiol.">
        <title>Metabolic versatility and indigenous origin of the archaeon Thermococcus sibiricus, isolated from a siberian oil reservoir, as revealed by genome analysis.</title>
        <authorList>
            <person name="Mardanov A.V."/>
            <person name="Ravin N.V."/>
            <person name="Svetlitchnyi V.A."/>
            <person name="Beletsky A.V."/>
            <person name="Miroshnichenko M.L."/>
            <person name="Bonch-Osmolovskaya E.A."/>
            <person name="Skryabin K.G."/>
        </authorList>
    </citation>
    <scope>NUCLEOTIDE SEQUENCE [LARGE SCALE GENOMIC DNA]</scope>
    <source>
        <strain>DSM 12597 / MM 739</strain>
    </source>
</reference>
<organism>
    <name type="scientific">Thermococcus sibiricus (strain DSM 12597 / MM 739)</name>
    <dbReference type="NCBI Taxonomy" id="604354"/>
    <lineage>
        <taxon>Archaea</taxon>
        <taxon>Methanobacteriati</taxon>
        <taxon>Methanobacteriota</taxon>
        <taxon>Thermococci</taxon>
        <taxon>Thermococcales</taxon>
        <taxon>Thermococcaceae</taxon>
        <taxon>Thermococcus</taxon>
    </lineage>
</organism>